<sequence length="213" mass="23683">MLLQKEREEIVAYGKKMISSGLTKGTGGNISIFNREQGLVAISPSGLEYYETKPEDVVILNLDGEVIEGERKPSSELDMHLIYYRKREDINALVHTHSPYAKTIASLGWELPAVSYLIAFAGPNVRCAPYETFGTKQLADAAFEGMIDRRAVLLANHGLIAGANNIKMAFTVAEEIEFCAQIYYQTKSIGEPKLLPEDEMENLAKKFEGYGQQ</sequence>
<gene>
    <name evidence="2" type="primary">drdA</name>
    <name evidence="5" type="ORF">HD73_0462</name>
</gene>
<evidence type="ECO:0000269" key="1">
    <source>
    </source>
</evidence>
<evidence type="ECO:0000303" key="2">
    <source>
    </source>
</evidence>
<evidence type="ECO:0000305" key="3"/>
<evidence type="ECO:0000305" key="4">
    <source>
    </source>
</evidence>
<evidence type="ECO:0000312" key="5">
    <source>
        <dbReference type="EMBL" id="AGE76042.1"/>
    </source>
</evidence>
<evidence type="ECO:0007744" key="6">
    <source>
        <dbReference type="PDB" id="6BTD"/>
    </source>
</evidence>
<evidence type="ECO:0007744" key="7">
    <source>
        <dbReference type="PDB" id="6BTG"/>
    </source>
</evidence>
<accession>P0DTQ0</accession>
<name>DRDA_BACT7</name>
<comment type="function">
    <text evidence="1">Catalyzes the cleavage of 5-deoxy-D-ribulose 1-phosphate to yield dihydroxyacetone phosphate (DHAP) and acetaldehyde, as part of a 5-deoxyribose salvage pathway that recycles this toxic radical SAM enzyme by-product to mainstream metabolites. Is also able to catalyze the reverse reaction, using several aldehydes as substrate, with acetaldehyde being the preferred substrate.</text>
</comment>
<comment type="catalytic activity">
    <reaction evidence="1">
        <text>5-deoxy-D-ribulose 1-phosphate = dihydroxyacetone phosphate + acetaldehyde</text>
        <dbReference type="Rhea" id="RHEA:61300"/>
        <dbReference type="ChEBI" id="CHEBI:15343"/>
        <dbReference type="ChEBI" id="CHEBI:57642"/>
        <dbReference type="ChEBI" id="CHEBI:144504"/>
    </reaction>
    <physiologicalReaction direction="left-to-right" evidence="1">
        <dbReference type="Rhea" id="RHEA:61301"/>
    </physiologicalReaction>
</comment>
<comment type="cofactor">
    <cofactor evidence="1">
        <name>Mn(2+)</name>
        <dbReference type="ChEBI" id="CHEBI:29035"/>
    </cofactor>
    <text evidence="1">Binds 1 Mn(2+) ion per subunit. To a much lesser extent, can also use Co(2+) and Mg(2+) as cofactor, but not Zn(2+).</text>
</comment>
<comment type="biophysicochemical properties">
    <kinetics>
        <KM evidence="1">36 uM for 5-deoxy-D-ribulose 1-phosphate</KM>
        <text evidence="1">kcat is 6.3 sec(-1) for the cleavage of 5-deoxy-D-ribulose 1-phosphate.</text>
    </kinetics>
</comment>
<comment type="pathway">
    <text evidence="4">Carbohydrate degradation.</text>
</comment>
<comment type="subunit">
    <text evidence="1">Forms homooligomers, possibly homotetramers.</text>
</comment>
<comment type="disruption phenotype">
    <text evidence="1">Cells lacking this gene show no impaired growth on minimal medium but addition of 5-deoxyribose inhibits growth at a higher level than wild-type.</text>
</comment>
<comment type="similarity">
    <text evidence="3">Belongs to the aldolase class II family.</text>
</comment>
<feature type="chain" id="PRO_0000448253" description="5-deoxy-D-ribulose 1-phosphate aldolase">
    <location>
        <begin position="1"/>
        <end position="213"/>
    </location>
</feature>
<feature type="active site" description="Proton donor/acceptor" evidence="4">
    <location>
        <position position="76"/>
    </location>
</feature>
<feature type="binding site" evidence="4">
    <location>
        <begin position="28"/>
        <end position="29"/>
    </location>
    <ligand>
        <name>substrate</name>
    </ligand>
</feature>
<feature type="binding site" evidence="4">
    <location>
        <begin position="45"/>
        <end position="46"/>
    </location>
    <ligand>
        <name>substrate</name>
    </ligand>
</feature>
<feature type="binding site" evidence="4">
    <location>
        <begin position="74"/>
        <end position="76"/>
    </location>
    <ligand>
        <name>substrate</name>
    </ligand>
</feature>
<feature type="binding site" evidence="1">
    <location>
        <position position="76"/>
    </location>
    <ligand>
        <name>Mn(2+)</name>
        <dbReference type="ChEBI" id="CHEBI:29035"/>
    </ligand>
</feature>
<feature type="binding site" evidence="1">
    <location>
        <position position="95"/>
    </location>
    <ligand>
        <name>Mn(2+)</name>
        <dbReference type="ChEBI" id="CHEBI:29035"/>
    </ligand>
</feature>
<feature type="binding site" evidence="1">
    <location>
        <position position="97"/>
    </location>
    <ligand>
        <name>Mn(2+)</name>
        <dbReference type="ChEBI" id="CHEBI:29035"/>
    </ligand>
</feature>
<feature type="binding site" evidence="1">
    <location>
        <position position="157"/>
    </location>
    <ligand>
        <name>Mn(2+)</name>
        <dbReference type="ChEBI" id="CHEBI:29035"/>
    </ligand>
</feature>
<organism>
    <name type="scientific">Bacillus thuringiensis serovar kurstaki (strain ATCC 35866 / NRRL B-4488 / HD73)</name>
    <dbReference type="NCBI Taxonomy" id="1279365"/>
    <lineage>
        <taxon>Bacteria</taxon>
        <taxon>Bacillati</taxon>
        <taxon>Bacillota</taxon>
        <taxon>Bacilli</taxon>
        <taxon>Bacillales</taxon>
        <taxon>Bacillaceae</taxon>
        <taxon>Bacillus</taxon>
        <taxon>Bacillus cereus group</taxon>
    </lineage>
</organism>
<protein>
    <recommendedName>
        <fullName evidence="4">5-deoxy-D-ribulose 1-phosphate aldolase</fullName>
        <ecNumber evidence="1">4.1.2.-</ecNumber>
    </recommendedName>
    <alternativeName>
        <fullName evidence="2">5-deoxyribose disposal aldolase</fullName>
    </alternativeName>
</protein>
<reference key="1">
    <citation type="journal article" date="2013" name="Genome Announc.">
        <title>Complete genome sequence of Bacillus thuringiensis subsp. kurstaki strain HD73.</title>
        <authorList>
            <person name="Liu G."/>
            <person name="Song L."/>
            <person name="Shu C."/>
            <person name="Wang P."/>
            <person name="Deng C."/>
            <person name="Peng Q."/>
            <person name="Lereclus D."/>
            <person name="Wang X."/>
            <person name="Huang D."/>
            <person name="Zhang J."/>
            <person name="Song F."/>
        </authorList>
    </citation>
    <scope>NUCLEOTIDE SEQUENCE [LARGE SCALE GENOMIC DNA]</scope>
    <source>
        <strain>ATCC 35866 / NRRL B-4488 / HD73</strain>
    </source>
</reference>
<reference evidence="6 7" key="2">
    <citation type="journal article" date="2018" name="Nat. Commun.">
        <title>Salvage of the 5-deoxyribose byproduct of radical SAM enzymes.</title>
        <authorList>
            <person name="Beaudoin G.A.W."/>
            <person name="Li Q."/>
            <person name="Folz J."/>
            <person name="Fiehn O."/>
            <person name="Goodsell J.L."/>
            <person name="Angerhofer A."/>
            <person name="Bruner S.D."/>
            <person name="Hanson A.D."/>
        </authorList>
    </citation>
    <scope>X-RAY CRYSTALLOGRAPHY (1.55 ANGSTROMS) IN COMPLEXES WITH MANGANESE AND DHAP</scope>
    <scope>FUNCTION</scope>
    <scope>CATALYTIC ACTIVITY</scope>
    <scope>BIOPHYSICOCHEMICAL PROPERTIES</scope>
    <scope>COFACTOR</scope>
    <scope>DISRUPTION PHENOTYPE</scope>
    <scope>PATHWAY</scope>
    <scope>REACTION MECHANISM</scope>
    <scope>ACTIVE SITE</scope>
    <source>
        <strain>HD73-20 / BGSC 4D22</strain>
    </source>
</reference>
<dbReference type="EC" id="4.1.2.-" evidence="1"/>
<dbReference type="EMBL" id="CP004069">
    <property type="protein sequence ID" value="AGE76042.1"/>
    <property type="molecule type" value="Genomic_DNA"/>
</dbReference>
<dbReference type="RefSeq" id="WP_000926553.1">
    <property type="nucleotide sequence ID" value="NC_020238.1"/>
</dbReference>
<dbReference type="PDB" id="6BTD">
    <property type="method" value="X-ray"/>
    <property type="resolution" value="1.55 A"/>
    <property type="chains" value="A=1-213"/>
</dbReference>
<dbReference type="PDB" id="6BTG">
    <property type="method" value="X-ray"/>
    <property type="resolution" value="1.70 A"/>
    <property type="chains" value="A=1-213"/>
</dbReference>
<dbReference type="PDBsum" id="6BTD"/>
<dbReference type="PDBsum" id="6BTG"/>
<dbReference type="SMR" id="P0DTQ0"/>
<dbReference type="KEGG" id="btt:HD73_0462"/>
<dbReference type="BioCyc" id="MetaCyc:MONOMER-21303"/>
<dbReference type="BRENDA" id="4.1.2.62">
    <property type="organism ID" value="8219"/>
</dbReference>
<dbReference type="GO" id="GO:0005829">
    <property type="term" value="C:cytosol"/>
    <property type="evidence" value="ECO:0007669"/>
    <property type="project" value="TreeGrafter"/>
</dbReference>
<dbReference type="GO" id="GO:0016832">
    <property type="term" value="F:aldehyde-lyase activity"/>
    <property type="evidence" value="ECO:0000314"/>
    <property type="project" value="UniProtKB"/>
</dbReference>
<dbReference type="GO" id="GO:0030145">
    <property type="term" value="F:manganese ion binding"/>
    <property type="evidence" value="ECO:0000314"/>
    <property type="project" value="UniProtKB"/>
</dbReference>
<dbReference type="GO" id="GO:0005975">
    <property type="term" value="P:carbohydrate metabolic process"/>
    <property type="evidence" value="ECO:0000314"/>
    <property type="project" value="UniProtKB"/>
</dbReference>
<dbReference type="GO" id="GO:0019323">
    <property type="term" value="P:pentose catabolic process"/>
    <property type="evidence" value="ECO:0007669"/>
    <property type="project" value="TreeGrafter"/>
</dbReference>
<dbReference type="GO" id="GO:0110052">
    <property type="term" value="P:toxic metabolite repair"/>
    <property type="evidence" value="ECO:0000315"/>
    <property type="project" value="UniProtKB"/>
</dbReference>
<dbReference type="FunFam" id="3.40.225.10:FF:000005">
    <property type="entry name" value="L-fuculose phosphate aldolase"/>
    <property type="match status" value="1"/>
</dbReference>
<dbReference type="Gene3D" id="3.40.225.10">
    <property type="entry name" value="Class II aldolase/adducin N-terminal domain"/>
    <property type="match status" value="1"/>
</dbReference>
<dbReference type="InterPro" id="IPR050197">
    <property type="entry name" value="Aldolase_class_II_sugar_metab"/>
</dbReference>
<dbReference type="InterPro" id="IPR001303">
    <property type="entry name" value="Aldolase_II/adducin_N"/>
</dbReference>
<dbReference type="InterPro" id="IPR036409">
    <property type="entry name" value="Aldolase_II/adducin_N_sf"/>
</dbReference>
<dbReference type="NCBIfam" id="NF005302">
    <property type="entry name" value="PRK06833.1"/>
    <property type="match status" value="1"/>
</dbReference>
<dbReference type="PANTHER" id="PTHR22789:SF0">
    <property type="entry name" value="3-OXO-TETRONATE 4-PHOSPHATE DECARBOXYLASE-RELATED"/>
    <property type="match status" value="1"/>
</dbReference>
<dbReference type="PANTHER" id="PTHR22789">
    <property type="entry name" value="FUCULOSE PHOSPHATE ALDOLASE"/>
    <property type="match status" value="1"/>
</dbReference>
<dbReference type="Pfam" id="PF00596">
    <property type="entry name" value="Aldolase_II"/>
    <property type="match status" value="1"/>
</dbReference>
<dbReference type="SMART" id="SM01007">
    <property type="entry name" value="Aldolase_II"/>
    <property type="match status" value="1"/>
</dbReference>
<dbReference type="SUPFAM" id="SSF53639">
    <property type="entry name" value="AraD/HMP-PK domain-like"/>
    <property type="match status" value="1"/>
</dbReference>
<proteinExistence type="evidence at protein level"/>
<keyword id="KW-0002">3D-structure</keyword>
<keyword id="KW-0456">Lyase</keyword>
<keyword id="KW-0464">Manganese</keyword>
<keyword id="KW-0479">Metal-binding</keyword>